<reference key="1">
    <citation type="journal article" date="2007" name="Science">
        <title>Legumes symbioses: absence of nod genes in photosynthetic bradyrhizobia.</title>
        <authorList>
            <person name="Giraud E."/>
            <person name="Moulin L."/>
            <person name="Vallenet D."/>
            <person name="Barbe V."/>
            <person name="Cytryn E."/>
            <person name="Avarre J.-C."/>
            <person name="Jaubert M."/>
            <person name="Simon D."/>
            <person name="Cartieaux F."/>
            <person name="Prin Y."/>
            <person name="Bena G."/>
            <person name="Hannibal L."/>
            <person name="Fardoux J."/>
            <person name="Kojadinovic M."/>
            <person name="Vuillet L."/>
            <person name="Lajus A."/>
            <person name="Cruveiller S."/>
            <person name="Rouy Z."/>
            <person name="Mangenot S."/>
            <person name="Segurens B."/>
            <person name="Dossat C."/>
            <person name="Franck W.L."/>
            <person name="Chang W.-S."/>
            <person name="Saunders E."/>
            <person name="Bruce D."/>
            <person name="Richardson P."/>
            <person name="Normand P."/>
            <person name="Dreyfus B."/>
            <person name="Pignol D."/>
            <person name="Stacey G."/>
            <person name="Emerich D."/>
            <person name="Vermeglio A."/>
            <person name="Medigue C."/>
            <person name="Sadowsky M."/>
        </authorList>
    </citation>
    <scope>NUCLEOTIDE SEQUENCE [LARGE SCALE GENOMIC DNA]</scope>
    <source>
        <strain>BTAi1 / ATCC BAA-1182</strain>
    </source>
</reference>
<comment type="catalytic activity">
    <reaction evidence="1">
        <text>tRNA(Cys) + L-cysteine + ATP = L-cysteinyl-tRNA(Cys) + AMP + diphosphate</text>
        <dbReference type="Rhea" id="RHEA:17773"/>
        <dbReference type="Rhea" id="RHEA-COMP:9661"/>
        <dbReference type="Rhea" id="RHEA-COMP:9679"/>
        <dbReference type="ChEBI" id="CHEBI:30616"/>
        <dbReference type="ChEBI" id="CHEBI:33019"/>
        <dbReference type="ChEBI" id="CHEBI:35235"/>
        <dbReference type="ChEBI" id="CHEBI:78442"/>
        <dbReference type="ChEBI" id="CHEBI:78517"/>
        <dbReference type="ChEBI" id="CHEBI:456215"/>
        <dbReference type="EC" id="6.1.1.16"/>
    </reaction>
</comment>
<comment type="cofactor">
    <cofactor evidence="1">
        <name>Zn(2+)</name>
        <dbReference type="ChEBI" id="CHEBI:29105"/>
    </cofactor>
    <text evidence="1">Binds 1 zinc ion per subunit.</text>
</comment>
<comment type="subunit">
    <text evidence="1">Monomer.</text>
</comment>
<comment type="subcellular location">
    <subcellularLocation>
        <location evidence="1">Cytoplasm</location>
    </subcellularLocation>
</comment>
<comment type="similarity">
    <text evidence="1">Belongs to the class-I aminoacyl-tRNA synthetase family.</text>
</comment>
<sequence>MELRLYDTATREKRPFVPLHRNNVRMYVCGPTVYDFAHIGNARPVIVFDVLFRLLRHLYGAEHVTYVRNITDVDDKINARAARDFPGLPLNEAIRNVTELTERQFHEDVDALGCLRPTIEPRATEHIAEMRDIIERLVAGGFAYVAEDHVLFSPAAMNAANKVLPRYGALANRSLDEMIAGARVDVAPYKKDATDFVLWKPSKPGEPSWPSPAGIAAEGRPGWHIECSAMSWKHLGETFDIHGGGIDLVFPHHENEVAQSCCAFHTARMANVWMHNGFLQVEGEKMSKSLGNFVTIREVLADWPGEVVRLNMLKTHYRSPIDWTLRGLEESAKAVDDWYRTAGDLREGRPADAVIEALRDDINTPLMVAVLHGLRNEAASGGVDDVARFVGSLRLLGFLAEDAAQWRARKQQASGVDAAKVEGLIAERTAARARKDFKESDRLRDELAAMGVVLKDGKGADGKPVTTWEMAR</sequence>
<evidence type="ECO:0000255" key="1">
    <source>
        <dbReference type="HAMAP-Rule" id="MF_00041"/>
    </source>
</evidence>
<dbReference type="EC" id="6.1.1.16" evidence="1"/>
<dbReference type="EMBL" id="CP000494">
    <property type="protein sequence ID" value="ABQ35591.1"/>
    <property type="molecule type" value="Genomic_DNA"/>
</dbReference>
<dbReference type="RefSeq" id="WP_012043602.1">
    <property type="nucleotide sequence ID" value="NC_009485.1"/>
</dbReference>
<dbReference type="SMR" id="A5EHE7"/>
<dbReference type="STRING" id="288000.BBta_3498"/>
<dbReference type="KEGG" id="bbt:BBta_3498"/>
<dbReference type="eggNOG" id="COG0215">
    <property type="taxonomic scope" value="Bacteria"/>
</dbReference>
<dbReference type="HOGENOM" id="CLU_013528_0_1_5"/>
<dbReference type="OrthoDB" id="9815130at2"/>
<dbReference type="Proteomes" id="UP000000246">
    <property type="component" value="Chromosome"/>
</dbReference>
<dbReference type="GO" id="GO:0005829">
    <property type="term" value="C:cytosol"/>
    <property type="evidence" value="ECO:0007669"/>
    <property type="project" value="TreeGrafter"/>
</dbReference>
<dbReference type="GO" id="GO:0005524">
    <property type="term" value="F:ATP binding"/>
    <property type="evidence" value="ECO:0007669"/>
    <property type="project" value="UniProtKB-UniRule"/>
</dbReference>
<dbReference type="GO" id="GO:0004817">
    <property type="term" value="F:cysteine-tRNA ligase activity"/>
    <property type="evidence" value="ECO:0007669"/>
    <property type="project" value="UniProtKB-UniRule"/>
</dbReference>
<dbReference type="GO" id="GO:0008270">
    <property type="term" value="F:zinc ion binding"/>
    <property type="evidence" value="ECO:0007669"/>
    <property type="project" value="UniProtKB-UniRule"/>
</dbReference>
<dbReference type="GO" id="GO:0006423">
    <property type="term" value="P:cysteinyl-tRNA aminoacylation"/>
    <property type="evidence" value="ECO:0007669"/>
    <property type="project" value="UniProtKB-UniRule"/>
</dbReference>
<dbReference type="CDD" id="cd00672">
    <property type="entry name" value="CysRS_core"/>
    <property type="match status" value="1"/>
</dbReference>
<dbReference type="FunFam" id="3.40.50.620:FF:000068">
    <property type="entry name" value="Cysteine--tRNA ligase"/>
    <property type="match status" value="1"/>
</dbReference>
<dbReference type="Gene3D" id="1.20.120.1910">
    <property type="entry name" value="Cysteine-tRNA ligase, C-terminal anti-codon recognition domain"/>
    <property type="match status" value="1"/>
</dbReference>
<dbReference type="Gene3D" id="3.40.50.620">
    <property type="entry name" value="HUPs"/>
    <property type="match status" value="1"/>
</dbReference>
<dbReference type="HAMAP" id="MF_00041">
    <property type="entry name" value="Cys_tRNA_synth"/>
    <property type="match status" value="1"/>
</dbReference>
<dbReference type="InterPro" id="IPR015803">
    <property type="entry name" value="Cys-tRNA-ligase"/>
</dbReference>
<dbReference type="InterPro" id="IPR015273">
    <property type="entry name" value="Cys-tRNA-synt_Ia_DALR"/>
</dbReference>
<dbReference type="InterPro" id="IPR024909">
    <property type="entry name" value="Cys-tRNA/MSH_ligase"/>
</dbReference>
<dbReference type="InterPro" id="IPR056411">
    <property type="entry name" value="CysS_C"/>
</dbReference>
<dbReference type="InterPro" id="IPR014729">
    <property type="entry name" value="Rossmann-like_a/b/a_fold"/>
</dbReference>
<dbReference type="InterPro" id="IPR032678">
    <property type="entry name" value="tRNA-synt_1_cat_dom"/>
</dbReference>
<dbReference type="InterPro" id="IPR009080">
    <property type="entry name" value="tRNAsynth_Ia_anticodon-bd"/>
</dbReference>
<dbReference type="NCBIfam" id="TIGR00435">
    <property type="entry name" value="cysS"/>
    <property type="match status" value="1"/>
</dbReference>
<dbReference type="PANTHER" id="PTHR10890:SF3">
    <property type="entry name" value="CYSTEINE--TRNA LIGASE, CYTOPLASMIC"/>
    <property type="match status" value="1"/>
</dbReference>
<dbReference type="PANTHER" id="PTHR10890">
    <property type="entry name" value="CYSTEINYL-TRNA SYNTHETASE"/>
    <property type="match status" value="1"/>
</dbReference>
<dbReference type="Pfam" id="PF23493">
    <property type="entry name" value="CysS_C"/>
    <property type="match status" value="1"/>
</dbReference>
<dbReference type="Pfam" id="PF01406">
    <property type="entry name" value="tRNA-synt_1e"/>
    <property type="match status" value="1"/>
</dbReference>
<dbReference type="PRINTS" id="PR00983">
    <property type="entry name" value="TRNASYNTHCYS"/>
</dbReference>
<dbReference type="SMART" id="SM00840">
    <property type="entry name" value="DALR_2"/>
    <property type="match status" value="1"/>
</dbReference>
<dbReference type="SUPFAM" id="SSF47323">
    <property type="entry name" value="Anticodon-binding domain of a subclass of class I aminoacyl-tRNA synthetases"/>
    <property type="match status" value="1"/>
</dbReference>
<dbReference type="SUPFAM" id="SSF52374">
    <property type="entry name" value="Nucleotidylyl transferase"/>
    <property type="match status" value="1"/>
</dbReference>
<proteinExistence type="inferred from homology"/>
<keyword id="KW-0030">Aminoacyl-tRNA synthetase</keyword>
<keyword id="KW-0067">ATP-binding</keyword>
<keyword id="KW-0963">Cytoplasm</keyword>
<keyword id="KW-0436">Ligase</keyword>
<keyword id="KW-0479">Metal-binding</keyword>
<keyword id="KW-0547">Nucleotide-binding</keyword>
<keyword id="KW-0648">Protein biosynthesis</keyword>
<keyword id="KW-1185">Reference proteome</keyword>
<keyword id="KW-0862">Zinc</keyword>
<name>SYC_BRASB</name>
<organism>
    <name type="scientific">Bradyrhizobium sp. (strain BTAi1 / ATCC BAA-1182)</name>
    <dbReference type="NCBI Taxonomy" id="288000"/>
    <lineage>
        <taxon>Bacteria</taxon>
        <taxon>Pseudomonadati</taxon>
        <taxon>Pseudomonadota</taxon>
        <taxon>Alphaproteobacteria</taxon>
        <taxon>Hyphomicrobiales</taxon>
        <taxon>Nitrobacteraceae</taxon>
        <taxon>Bradyrhizobium</taxon>
    </lineage>
</organism>
<accession>A5EHE7</accession>
<feature type="chain" id="PRO_1000006564" description="Cysteine--tRNA ligase">
    <location>
        <begin position="1"/>
        <end position="472"/>
    </location>
</feature>
<feature type="short sequence motif" description="'HIGH' region">
    <location>
        <begin position="31"/>
        <end position="41"/>
    </location>
</feature>
<feature type="short sequence motif" description="'KMSKS' region">
    <location>
        <begin position="285"/>
        <end position="289"/>
    </location>
</feature>
<feature type="binding site" evidence="1">
    <location>
        <position position="29"/>
    </location>
    <ligand>
        <name>Zn(2+)</name>
        <dbReference type="ChEBI" id="CHEBI:29105"/>
    </ligand>
</feature>
<feature type="binding site" evidence="1">
    <location>
        <position position="227"/>
    </location>
    <ligand>
        <name>Zn(2+)</name>
        <dbReference type="ChEBI" id="CHEBI:29105"/>
    </ligand>
</feature>
<feature type="binding site" evidence="1">
    <location>
        <position position="252"/>
    </location>
    <ligand>
        <name>Zn(2+)</name>
        <dbReference type="ChEBI" id="CHEBI:29105"/>
    </ligand>
</feature>
<feature type="binding site" evidence="1">
    <location>
        <position position="256"/>
    </location>
    <ligand>
        <name>Zn(2+)</name>
        <dbReference type="ChEBI" id="CHEBI:29105"/>
    </ligand>
</feature>
<feature type="binding site" evidence="1">
    <location>
        <position position="288"/>
    </location>
    <ligand>
        <name>ATP</name>
        <dbReference type="ChEBI" id="CHEBI:30616"/>
    </ligand>
</feature>
<gene>
    <name evidence="1" type="primary">cysS</name>
    <name type="ordered locus">BBta_3498</name>
</gene>
<protein>
    <recommendedName>
        <fullName evidence="1">Cysteine--tRNA ligase</fullName>
        <ecNumber evidence="1">6.1.1.16</ecNumber>
    </recommendedName>
    <alternativeName>
        <fullName evidence="1">Cysteinyl-tRNA synthetase</fullName>
        <shortName evidence="1">CysRS</shortName>
    </alternativeName>
</protein>